<organism>
    <name type="scientific">Cupriavidus necator (strain ATCC 17699 / DSM 428 / KCTC 22496 / NCIMB 10442 / H16 / Stanier 337)</name>
    <name type="common">Ralstonia eutropha</name>
    <dbReference type="NCBI Taxonomy" id="381666"/>
    <lineage>
        <taxon>Bacteria</taxon>
        <taxon>Pseudomonadati</taxon>
        <taxon>Pseudomonadota</taxon>
        <taxon>Betaproteobacteria</taxon>
        <taxon>Burkholderiales</taxon>
        <taxon>Burkholderiaceae</taxon>
        <taxon>Cupriavidus</taxon>
    </lineage>
</organism>
<dbReference type="EC" id="1.5.1.5" evidence="1"/>
<dbReference type="EC" id="3.5.4.9" evidence="1"/>
<dbReference type="EMBL" id="AM260479">
    <property type="protein sequence ID" value="CAJ92506.1"/>
    <property type="molecule type" value="Genomic_DNA"/>
</dbReference>
<dbReference type="RefSeq" id="WP_010813076.1">
    <property type="nucleotide sequence ID" value="NZ_CP039287.1"/>
</dbReference>
<dbReference type="SMR" id="Q0KBW5"/>
<dbReference type="STRING" id="381666.H16_A1370"/>
<dbReference type="KEGG" id="reh:H16_A1370"/>
<dbReference type="eggNOG" id="COG0190">
    <property type="taxonomic scope" value="Bacteria"/>
</dbReference>
<dbReference type="HOGENOM" id="CLU_034045_2_1_4"/>
<dbReference type="OrthoDB" id="9803580at2"/>
<dbReference type="UniPathway" id="UPA00193"/>
<dbReference type="Proteomes" id="UP000008210">
    <property type="component" value="Chromosome 1"/>
</dbReference>
<dbReference type="GO" id="GO:0005829">
    <property type="term" value="C:cytosol"/>
    <property type="evidence" value="ECO:0007669"/>
    <property type="project" value="TreeGrafter"/>
</dbReference>
<dbReference type="GO" id="GO:0004477">
    <property type="term" value="F:methenyltetrahydrofolate cyclohydrolase activity"/>
    <property type="evidence" value="ECO:0007669"/>
    <property type="project" value="UniProtKB-UniRule"/>
</dbReference>
<dbReference type="GO" id="GO:0004488">
    <property type="term" value="F:methylenetetrahydrofolate dehydrogenase (NADP+) activity"/>
    <property type="evidence" value="ECO:0007669"/>
    <property type="project" value="UniProtKB-UniRule"/>
</dbReference>
<dbReference type="GO" id="GO:0000105">
    <property type="term" value="P:L-histidine biosynthetic process"/>
    <property type="evidence" value="ECO:0007669"/>
    <property type="project" value="UniProtKB-KW"/>
</dbReference>
<dbReference type="GO" id="GO:0009086">
    <property type="term" value="P:methionine biosynthetic process"/>
    <property type="evidence" value="ECO:0007669"/>
    <property type="project" value="UniProtKB-KW"/>
</dbReference>
<dbReference type="GO" id="GO:0006164">
    <property type="term" value="P:purine nucleotide biosynthetic process"/>
    <property type="evidence" value="ECO:0007669"/>
    <property type="project" value="UniProtKB-KW"/>
</dbReference>
<dbReference type="GO" id="GO:0035999">
    <property type="term" value="P:tetrahydrofolate interconversion"/>
    <property type="evidence" value="ECO:0007669"/>
    <property type="project" value="UniProtKB-UniRule"/>
</dbReference>
<dbReference type="CDD" id="cd01080">
    <property type="entry name" value="NAD_bind_m-THF_DH_Cyclohyd"/>
    <property type="match status" value="1"/>
</dbReference>
<dbReference type="FunFam" id="3.40.50.720:FF:000094">
    <property type="entry name" value="Bifunctional protein FolD"/>
    <property type="match status" value="1"/>
</dbReference>
<dbReference type="FunFam" id="3.40.50.10860:FF:000005">
    <property type="entry name" value="C-1-tetrahydrofolate synthase, cytoplasmic, putative"/>
    <property type="match status" value="1"/>
</dbReference>
<dbReference type="Gene3D" id="3.40.50.10860">
    <property type="entry name" value="Leucine Dehydrogenase, chain A, domain 1"/>
    <property type="match status" value="1"/>
</dbReference>
<dbReference type="Gene3D" id="3.40.50.720">
    <property type="entry name" value="NAD(P)-binding Rossmann-like Domain"/>
    <property type="match status" value="1"/>
</dbReference>
<dbReference type="HAMAP" id="MF_01576">
    <property type="entry name" value="THF_DHG_CYH"/>
    <property type="match status" value="1"/>
</dbReference>
<dbReference type="InterPro" id="IPR046346">
    <property type="entry name" value="Aminoacid_DH-like_N_sf"/>
</dbReference>
<dbReference type="InterPro" id="IPR036291">
    <property type="entry name" value="NAD(P)-bd_dom_sf"/>
</dbReference>
<dbReference type="InterPro" id="IPR000672">
    <property type="entry name" value="THF_DH/CycHdrlase"/>
</dbReference>
<dbReference type="InterPro" id="IPR020630">
    <property type="entry name" value="THF_DH/CycHdrlase_cat_dom"/>
</dbReference>
<dbReference type="InterPro" id="IPR020867">
    <property type="entry name" value="THF_DH/CycHdrlase_CS"/>
</dbReference>
<dbReference type="InterPro" id="IPR020631">
    <property type="entry name" value="THF_DH/CycHdrlase_NAD-bd_dom"/>
</dbReference>
<dbReference type="NCBIfam" id="NF008058">
    <property type="entry name" value="PRK10792.1"/>
    <property type="match status" value="1"/>
</dbReference>
<dbReference type="NCBIfam" id="NF010783">
    <property type="entry name" value="PRK14186.1"/>
    <property type="match status" value="1"/>
</dbReference>
<dbReference type="NCBIfam" id="NF010786">
    <property type="entry name" value="PRK14189.1"/>
    <property type="match status" value="1"/>
</dbReference>
<dbReference type="PANTHER" id="PTHR48099:SF5">
    <property type="entry name" value="C-1-TETRAHYDROFOLATE SYNTHASE, CYTOPLASMIC"/>
    <property type="match status" value="1"/>
</dbReference>
<dbReference type="PANTHER" id="PTHR48099">
    <property type="entry name" value="C-1-TETRAHYDROFOLATE SYNTHASE, CYTOPLASMIC-RELATED"/>
    <property type="match status" value="1"/>
</dbReference>
<dbReference type="Pfam" id="PF00763">
    <property type="entry name" value="THF_DHG_CYH"/>
    <property type="match status" value="1"/>
</dbReference>
<dbReference type="Pfam" id="PF02882">
    <property type="entry name" value="THF_DHG_CYH_C"/>
    <property type="match status" value="1"/>
</dbReference>
<dbReference type="PRINTS" id="PR00085">
    <property type="entry name" value="THFDHDRGNASE"/>
</dbReference>
<dbReference type="SUPFAM" id="SSF53223">
    <property type="entry name" value="Aminoacid dehydrogenase-like, N-terminal domain"/>
    <property type="match status" value="1"/>
</dbReference>
<dbReference type="SUPFAM" id="SSF51735">
    <property type="entry name" value="NAD(P)-binding Rossmann-fold domains"/>
    <property type="match status" value="1"/>
</dbReference>
<dbReference type="PROSITE" id="PS00766">
    <property type="entry name" value="THF_DHG_CYH_1"/>
    <property type="match status" value="1"/>
</dbReference>
<dbReference type="PROSITE" id="PS00767">
    <property type="entry name" value="THF_DHG_CYH_2"/>
    <property type="match status" value="1"/>
</dbReference>
<gene>
    <name evidence="1" type="primary">folD</name>
    <name type="ordered locus">H16_A1370</name>
</gene>
<evidence type="ECO:0000255" key="1">
    <source>
        <dbReference type="HAMAP-Rule" id="MF_01576"/>
    </source>
</evidence>
<name>FOLD_CUPNH</name>
<protein>
    <recommendedName>
        <fullName evidence="1">Bifunctional protein FolD</fullName>
    </recommendedName>
    <domain>
        <recommendedName>
            <fullName evidence="1">Methylenetetrahydrofolate dehydrogenase</fullName>
            <ecNumber evidence="1">1.5.1.5</ecNumber>
        </recommendedName>
    </domain>
    <domain>
        <recommendedName>
            <fullName evidence="1">Methenyltetrahydrofolate cyclohydrolase</fullName>
            <ecNumber evidence="1">3.5.4.9</ecNumber>
        </recommendedName>
    </domain>
</protein>
<reference key="1">
    <citation type="journal article" date="2006" name="Nat. Biotechnol.">
        <title>Genome sequence of the bioplastic-producing 'Knallgas' bacterium Ralstonia eutropha H16.</title>
        <authorList>
            <person name="Pohlmann A."/>
            <person name="Fricke W.F."/>
            <person name="Reinecke F."/>
            <person name="Kusian B."/>
            <person name="Liesegang H."/>
            <person name="Cramm R."/>
            <person name="Eitinger T."/>
            <person name="Ewering C."/>
            <person name="Poetter M."/>
            <person name="Schwartz E."/>
            <person name="Strittmatter A."/>
            <person name="Voss I."/>
            <person name="Gottschalk G."/>
            <person name="Steinbuechel A."/>
            <person name="Friedrich B."/>
            <person name="Bowien B."/>
        </authorList>
    </citation>
    <scope>NUCLEOTIDE SEQUENCE [LARGE SCALE GENOMIC DNA]</scope>
    <source>
        <strain>ATCC 17699 / DSM 428 / KCTC 22496 / NCIMB 10442 / H16 / Stanier 337</strain>
    </source>
</reference>
<sequence length="283" mass="29863">MPAQLIDGNALAKQIRSEAALRAARLTERGHRPGLAVILVGEDPASQVYVRNKVKACQDNGFHSSLDRYPADLSEAELLARIEALNQDPNIHGILVQLPLPKHIDSHKVLEAIAPEKDVDGFHVANAGALMTGAPLFRPCTPYGCMKMLESVQFPLRGARAVVVGASNIVGKPMAMLLLQAGATVTICNSKTRDIGAHTRDADVVVAAVGKRNLITADMVKPGAVVIDVGMNRDDNGKLCGDVDFAGVREVAGYITPVPGGVGPMTITMLLVNTLEAAERAAG</sequence>
<accession>Q0KBW5</accession>
<feature type="chain" id="PRO_0000305870" description="Bifunctional protein FolD">
    <location>
        <begin position="1"/>
        <end position="283"/>
    </location>
</feature>
<feature type="binding site" evidence="1">
    <location>
        <begin position="165"/>
        <end position="167"/>
    </location>
    <ligand>
        <name>NADP(+)</name>
        <dbReference type="ChEBI" id="CHEBI:58349"/>
    </ligand>
</feature>
<feature type="binding site" evidence="1">
    <location>
        <position position="190"/>
    </location>
    <ligand>
        <name>NADP(+)</name>
        <dbReference type="ChEBI" id="CHEBI:58349"/>
    </ligand>
</feature>
<comment type="function">
    <text evidence="1">Catalyzes the oxidation of 5,10-methylenetetrahydrofolate to 5,10-methenyltetrahydrofolate and then the hydrolysis of 5,10-methenyltetrahydrofolate to 10-formyltetrahydrofolate.</text>
</comment>
<comment type="catalytic activity">
    <reaction evidence="1">
        <text>(6R)-5,10-methylene-5,6,7,8-tetrahydrofolate + NADP(+) = (6R)-5,10-methenyltetrahydrofolate + NADPH</text>
        <dbReference type="Rhea" id="RHEA:22812"/>
        <dbReference type="ChEBI" id="CHEBI:15636"/>
        <dbReference type="ChEBI" id="CHEBI:57455"/>
        <dbReference type="ChEBI" id="CHEBI:57783"/>
        <dbReference type="ChEBI" id="CHEBI:58349"/>
        <dbReference type="EC" id="1.5.1.5"/>
    </reaction>
</comment>
<comment type="catalytic activity">
    <reaction evidence="1">
        <text>(6R)-5,10-methenyltetrahydrofolate + H2O = (6R)-10-formyltetrahydrofolate + H(+)</text>
        <dbReference type="Rhea" id="RHEA:23700"/>
        <dbReference type="ChEBI" id="CHEBI:15377"/>
        <dbReference type="ChEBI" id="CHEBI:15378"/>
        <dbReference type="ChEBI" id="CHEBI:57455"/>
        <dbReference type="ChEBI" id="CHEBI:195366"/>
        <dbReference type="EC" id="3.5.4.9"/>
    </reaction>
</comment>
<comment type="pathway">
    <text evidence="1">One-carbon metabolism; tetrahydrofolate interconversion.</text>
</comment>
<comment type="subunit">
    <text evidence="1">Homodimer.</text>
</comment>
<comment type="similarity">
    <text evidence="1">Belongs to the tetrahydrofolate dehydrogenase/cyclohydrolase family.</text>
</comment>
<proteinExistence type="inferred from homology"/>
<keyword id="KW-0028">Amino-acid biosynthesis</keyword>
<keyword id="KW-0368">Histidine biosynthesis</keyword>
<keyword id="KW-0378">Hydrolase</keyword>
<keyword id="KW-0486">Methionine biosynthesis</keyword>
<keyword id="KW-0511">Multifunctional enzyme</keyword>
<keyword id="KW-0521">NADP</keyword>
<keyword id="KW-0554">One-carbon metabolism</keyword>
<keyword id="KW-0560">Oxidoreductase</keyword>
<keyword id="KW-0658">Purine biosynthesis</keyword>
<keyword id="KW-1185">Reference proteome</keyword>